<protein>
    <recommendedName>
        <fullName>Elongation factor Ts</fullName>
        <shortName>EF-Ts</shortName>
    </recommendedName>
</protein>
<evidence type="ECO:0000250" key="1"/>
<evidence type="ECO:0000305" key="2"/>
<comment type="function">
    <text evidence="1">Associates with the EF-Tu.GDP complex and induces the exchange of GDP to GTP. It remains bound to the aminoacyl-tRNA.EF-Tu.GTP complex up to the GTP hydrolysis stage on the ribosome (By similarity).</text>
</comment>
<comment type="subcellular location">
    <subcellularLocation>
        <location evidence="1">Cytoplasm</location>
    </subcellularLocation>
</comment>
<comment type="similarity">
    <text evidence="2">Belongs to the EF-Ts family.</text>
</comment>
<proteinExistence type="inferred from homology"/>
<feature type="chain" id="PRO_0000161103" description="Elongation factor Ts">
    <location>
        <begin position="1"/>
        <end position="282"/>
    </location>
</feature>
<feature type="region of interest" description="Involved in Mg(2+) ion dislocation from EF-Tu" evidence="1">
    <location>
        <begin position="80"/>
        <end position="83"/>
    </location>
</feature>
<feature type="sequence conflict" description="In Ref. 3; BAA98904." evidence="2" ref="3">
    <original>T</original>
    <variation>A</variation>
    <location>
        <position position="71"/>
    </location>
</feature>
<reference key="1">
    <citation type="journal article" date="1999" name="Nat. Genet.">
        <title>Comparative genomes of Chlamydia pneumoniae and C. trachomatis.</title>
        <authorList>
            <person name="Kalman S."/>
            <person name="Mitchell W.P."/>
            <person name="Marathe R."/>
            <person name="Lammel C.J."/>
            <person name="Fan J."/>
            <person name="Hyman R.W."/>
            <person name="Olinger L."/>
            <person name="Grimwood J."/>
            <person name="Davis R.W."/>
            <person name="Stephens R.S."/>
        </authorList>
    </citation>
    <scope>NUCLEOTIDE SEQUENCE [LARGE SCALE GENOMIC DNA]</scope>
    <source>
        <strain>CWL029</strain>
    </source>
</reference>
<reference key="2">
    <citation type="journal article" date="2000" name="Nucleic Acids Res.">
        <title>Genome sequences of Chlamydia trachomatis MoPn and Chlamydia pneumoniae AR39.</title>
        <authorList>
            <person name="Read T.D."/>
            <person name="Brunham R.C."/>
            <person name="Shen C."/>
            <person name="Gill S.R."/>
            <person name="Heidelberg J.F."/>
            <person name="White O."/>
            <person name="Hickey E.K."/>
            <person name="Peterson J.D."/>
            <person name="Utterback T.R."/>
            <person name="Berry K.J."/>
            <person name="Bass S."/>
            <person name="Linher K.D."/>
            <person name="Weidman J.F."/>
            <person name="Khouri H.M."/>
            <person name="Craven B."/>
            <person name="Bowman C."/>
            <person name="Dodson R.J."/>
            <person name="Gwinn M.L."/>
            <person name="Nelson W.C."/>
            <person name="DeBoy R.T."/>
            <person name="Kolonay J.F."/>
            <person name="McClarty G."/>
            <person name="Salzberg S.L."/>
            <person name="Eisen J.A."/>
            <person name="Fraser C.M."/>
        </authorList>
    </citation>
    <scope>NUCLEOTIDE SEQUENCE [LARGE SCALE GENOMIC DNA]</scope>
    <source>
        <strain>AR39</strain>
    </source>
</reference>
<reference key="3">
    <citation type="journal article" date="2000" name="Nucleic Acids Res.">
        <title>Comparison of whole genome sequences of Chlamydia pneumoniae J138 from Japan and CWL029 from USA.</title>
        <authorList>
            <person name="Shirai M."/>
            <person name="Hirakawa H."/>
            <person name="Kimoto M."/>
            <person name="Tabuchi M."/>
            <person name="Kishi F."/>
            <person name="Ouchi K."/>
            <person name="Shiba T."/>
            <person name="Ishii K."/>
            <person name="Hattori M."/>
            <person name="Kuhara S."/>
            <person name="Nakazawa T."/>
        </authorList>
    </citation>
    <scope>NUCLEOTIDE SEQUENCE [LARGE SCALE GENOMIC DNA]</scope>
    <source>
        <strain>J138</strain>
    </source>
</reference>
<reference key="4">
    <citation type="submission" date="2002-05" db="EMBL/GenBank/DDBJ databases">
        <title>The genome sequence of Chlamydia pneumoniae TW183 and comparison with other Chlamydia strains based on whole genome sequence analysis.</title>
        <authorList>
            <person name="Geng M.M."/>
            <person name="Schuhmacher A."/>
            <person name="Muehldorfer I."/>
            <person name="Bensch K.W."/>
            <person name="Schaefer K.P."/>
            <person name="Schneider S."/>
            <person name="Pohl T."/>
            <person name="Essig A."/>
            <person name="Marre R."/>
            <person name="Melchers K."/>
        </authorList>
    </citation>
    <scope>NUCLEOTIDE SEQUENCE [LARGE SCALE GENOMIC DNA]</scope>
    <source>
        <strain>TW-183</strain>
    </source>
</reference>
<dbReference type="EMBL" id="AE001363">
    <property type="protein sequence ID" value="AAD18836.1"/>
    <property type="molecule type" value="Genomic_DNA"/>
</dbReference>
<dbReference type="EMBL" id="AE002161">
    <property type="protein sequence ID" value="AAF37942.1"/>
    <property type="molecule type" value="Genomic_DNA"/>
</dbReference>
<dbReference type="EMBL" id="BA000008">
    <property type="protein sequence ID" value="BAA98904.1"/>
    <property type="molecule type" value="Genomic_DNA"/>
</dbReference>
<dbReference type="EMBL" id="AE009440">
    <property type="protein sequence ID" value="AAP98653.1"/>
    <property type="molecule type" value="Genomic_DNA"/>
</dbReference>
<dbReference type="PIR" id="A72045">
    <property type="entry name" value="A72045"/>
</dbReference>
<dbReference type="PIR" id="F86577">
    <property type="entry name" value="F86577"/>
</dbReference>
<dbReference type="RefSeq" id="NP_224893.1">
    <property type="nucleotide sequence ID" value="NC_000922.1"/>
</dbReference>
<dbReference type="RefSeq" id="WP_010883335.1">
    <property type="nucleotide sequence ID" value="NZ_LN847257.1"/>
</dbReference>
<dbReference type="SMR" id="Q9Z7K8"/>
<dbReference type="STRING" id="406984.CPK_ORF00101"/>
<dbReference type="GeneID" id="45050749"/>
<dbReference type="KEGG" id="cpa:CP_0049"/>
<dbReference type="KEGG" id="cpj:tsf"/>
<dbReference type="KEGG" id="cpn:CPn_0697"/>
<dbReference type="KEGG" id="cpt:CpB0724"/>
<dbReference type="PATRIC" id="fig|115713.3.peg.771"/>
<dbReference type="eggNOG" id="COG0264">
    <property type="taxonomic scope" value="Bacteria"/>
</dbReference>
<dbReference type="HOGENOM" id="CLU_047155_0_0_0"/>
<dbReference type="OrthoDB" id="9808348at2"/>
<dbReference type="Proteomes" id="UP000000583">
    <property type="component" value="Chromosome"/>
</dbReference>
<dbReference type="Proteomes" id="UP000000801">
    <property type="component" value="Chromosome"/>
</dbReference>
<dbReference type="GO" id="GO:0005737">
    <property type="term" value="C:cytoplasm"/>
    <property type="evidence" value="ECO:0007669"/>
    <property type="project" value="UniProtKB-SubCell"/>
</dbReference>
<dbReference type="GO" id="GO:0003746">
    <property type="term" value="F:translation elongation factor activity"/>
    <property type="evidence" value="ECO:0007669"/>
    <property type="project" value="UniProtKB-UniRule"/>
</dbReference>
<dbReference type="CDD" id="cd14275">
    <property type="entry name" value="UBA_EF-Ts"/>
    <property type="match status" value="1"/>
</dbReference>
<dbReference type="FunFam" id="1.10.286.20:FF:000001">
    <property type="entry name" value="Elongation factor Ts"/>
    <property type="match status" value="1"/>
</dbReference>
<dbReference type="FunFam" id="1.10.8.10:FF:000001">
    <property type="entry name" value="Elongation factor Ts"/>
    <property type="match status" value="1"/>
</dbReference>
<dbReference type="Gene3D" id="1.10.286.20">
    <property type="match status" value="1"/>
</dbReference>
<dbReference type="Gene3D" id="1.10.8.10">
    <property type="entry name" value="DNA helicase RuvA subunit, C-terminal domain"/>
    <property type="match status" value="1"/>
</dbReference>
<dbReference type="Gene3D" id="3.30.479.20">
    <property type="entry name" value="Elongation factor Ts, dimerisation domain"/>
    <property type="match status" value="2"/>
</dbReference>
<dbReference type="HAMAP" id="MF_00050">
    <property type="entry name" value="EF_Ts"/>
    <property type="match status" value="1"/>
</dbReference>
<dbReference type="InterPro" id="IPR036402">
    <property type="entry name" value="EF-Ts_dimer_sf"/>
</dbReference>
<dbReference type="InterPro" id="IPR001816">
    <property type="entry name" value="Transl_elong_EFTs/EF1B"/>
</dbReference>
<dbReference type="InterPro" id="IPR014039">
    <property type="entry name" value="Transl_elong_EFTs/EF1B_dimer"/>
</dbReference>
<dbReference type="InterPro" id="IPR018101">
    <property type="entry name" value="Transl_elong_Ts_CS"/>
</dbReference>
<dbReference type="InterPro" id="IPR009060">
    <property type="entry name" value="UBA-like_sf"/>
</dbReference>
<dbReference type="NCBIfam" id="TIGR00116">
    <property type="entry name" value="tsf"/>
    <property type="match status" value="1"/>
</dbReference>
<dbReference type="PANTHER" id="PTHR11741">
    <property type="entry name" value="ELONGATION FACTOR TS"/>
    <property type="match status" value="1"/>
</dbReference>
<dbReference type="PANTHER" id="PTHR11741:SF0">
    <property type="entry name" value="ELONGATION FACTOR TS, MITOCHONDRIAL"/>
    <property type="match status" value="1"/>
</dbReference>
<dbReference type="Pfam" id="PF00889">
    <property type="entry name" value="EF_TS"/>
    <property type="match status" value="1"/>
</dbReference>
<dbReference type="SUPFAM" id="SSF54713">
    <property type="entry name" value="Elongation factor Ts (EF-Ts), dimerisation domain"/>
    <property type="match status" value="1"/>
</dbReference>
<dbReference type="SUPFAM" id="SSF46934">
    <property type="entry name" value="UBA-like"/>
    <property type="match status" value="1"/>
</dbReference>
<dbReference type="PROSITE" id="PS01126">
    <property type="entry name" value="EF_TS_1"/>
    <property type="match status" value="1"/>
</dbReference>
<dbReference type="PROSITE" id="PS01127">
    <property type="entry name" value="EF_TS_2"/>
    <property type="match status" value="1"/>
</dbReference>
<accession>Q9Z7K8</accession>
<accession>Q9JSC0</accession>
<gene>
    <name type="primary">tsf</name>
    <name type="ordered locus">CPn_0697</name>
    <name type="ordered locus">CP_0049</name>
    <name type="ordered locus">CpB0724</name>
</gene>
<name>EFTS_CHLPN</name>
<sequence>MSDFSMETLKTLRQQTGVGLTKCKEALEACGGNLEEAVVYLRKLGLASAGKKEHRETKEGIIAAKTDANGTALIEVNVETDFVANNAVFREFVSNLLNDILKYKVDTVEALSQAASSQDPSLSVDELRAVTMQTVGENIRISRVAYFPKATNSTVGIYSHGNGKTVALTMLSGSSTADSLAKDIAMHVVAAQPQFLSKESVPAEAIAKEKEVIASQIQGKPQEVIEKIVTGKLNTFFQEACLLEQPFIKNADLSIQSLIDDFSKTSGSSVAIEQFILWKIGA</sequence>
<keyword id="KW-0963">Cytoplasm</keyword>
<keyword id="KW-0251">Elongation factor</keyword>
<keyword id="KW-0648">Protein biosynthesis</keyword>
<organism>
    <name type="scientific">Chlamydia pneumoniae</name>
    <name type="common">Chlamydophila pneumoniae</name>
    <dbReference type="NCBI Taxonomy" id="83558"/>
    <lineage>
        <taxon>Bacteria</taxon>
        <taxon>Pseudomonadati</taxon>
        <taxon>Chlamydiota</taxon>
        <taxon>Chlamydiia</taxon>
        <taxon>Chlamydiales</taxon>
        <taxon>Chlamydiaceae</taxon>
        <taxon>Chlamydia/Chlamydophila group</taxon>
        <taxon>Chlamydia</taxon>
    </lineage>
</organism>